<organism>
    <name type="scientific">Pectobacterium carotovorum subsp. carotovorum (strain PC1)</name>
    <dbReference type="NCBI Taxonomy" id="561230"/>
    <lineage>
        <taxon>Bacteria</taxon>
        <taxon>Pseudomonadati</taxon>
        <taxon>Pseudomonadota</taxon>
        <taxon>Gammaproteobacteria</taxon>
        <taxon>Enterobacterales</taxon>
        <taxon>Pectobacteriaceae</taxon>
        <taxon>Pectobacterium</taxon>
    </lineage>
</organism>
<dbReference type="EMBL" id="CP001657">
    <property type="protein sequence ID" value="ACT15266.1"/>
    <property type="molecule type" value="Genomic_DNA"/>
</dbReference>
<dbReference type="RefSeq" id="WP_005976545.1">
    <property type="nucleotide sequence ID" value="NC_012917.1"/>
</dbReference>
<dbReference type="SMR" id="C6DJG7"/>
<dbReference type="STRING" id="561230.PC1_4252"/>
<dbReference type="GeneID" id="97764803"/>
<dbReference type="KEGG" id="pct:PC1_4252"/>
<dbReference type="eggNOG" id="ENOG5032S3K">
    <property type="taxonomic scope" value="Bacteria"/>
</dbReference>
<dbReference type="HOGENOM" id="CLU_148047_1_0_6"/>
<dbReference type="OrthoDB" id="9811659at2"/>
<dbReference type="Proteomes" id="UP000002736">
    <property type="component" value="Chromosome"/>
</dbReference>
<dbReference type="GO" id="GO:0005886">
    <property type="term" value="C:plasma membrane"/>
    <property type="evidence" value="ECO:0007669"/>
    <property type="project" value="UniProtKB-SubCell"/>
</dbReference>
<dbReference type="GO" id="GO:0045259">
    <property type="term" value="C:proton-transporting ATP synthase complex"/>
    <property type="evidence" value="ECO:0007669"/>
    <property type="project" value="UniProtKB-KW"/>
</dbReference>
<dbReference type="GO" id="GO:0033177">
    <property type="term" value="C:proton-transporting two-sector ATPase complex, proton-transporting domain"/>
    <property type="evidence" value="ECO:0007669"/>
    <property type="project" value="InterPro"/>
</dbReference>
<dbReference type="GO" id="GO:0008289">
    <property type="term" value="F:lipid binding"/>
    <property type="evidence" value="ECO:0007669"/>
    <property type="project" value="UniProtKB-KW"/>
</dbReference>
<dbReference type="GO" id="GO:0046933">
    <property type="term" value="F:proton-transporting ATP synthase activity, rotational mechanism"/>
    <property type="evidence" value="ECO:0007669"/>
    <property type="project" value="UniProtKB-UniRule"/>
</dbReference>
<dbReference type="CDD" id="cd18185">
    <property type="entry name" value="ATP-synt_Fo_c_ATPE"/>
    <property type="match status" value="1"/>
</dbReference>
<dbReference type="FunFam" id="1.20.20.10:FF:000002">
    <property type="entry name" value="ATP synthase subunit c"/>
    <property type="match status" value="1"/>
</dbReference>
<dbReference type="Gene3D" id="1.20.20.10">
    <property type="entry name" value="F1F0 ATP synthase subunit C"/>
    <property type="match status" value="1"/>
</dbReference>
<dbReference type="HAMAP" id="MF_01396">
    <property type="entry name" value="ATP_synth_c_bact"/>
    <property type="match status" value="1"/>
</dbReference>
<dbReference type="InterPro" id="IPR005953">
    <property type="entry name" value="ATP_synth_csu_bac/chlpt"/>
</dbReference>
<dbReference type="InterPro" id="IPR000454">
    <property type="entry name" value="ATP_synth_F0_csu"/>
</dbReference>
<dbReference type="InterPro" id="IPR020537">
    <property type="entry name" value="ATP_synth_F0_csu_DDCD_BS"/>
</dbReference>
<dbReference type="InterPro" id="IPR038662">
    <property type="entry name" value="ATP_synth_F0_csu_sf"/>
</dbReference>
<dbReference type="InterPro" id="IPR002379">
    <property type="entry name" value="ATPase_proteolipid_c-like_dom"/>
</dbReference>
<dbReference type="InterPro" id="IPR035921">
    <property type="entry name" value="F/V-ATP_Csub_sf"/>
</dbReference>
<dbReference type="NCBIfam" id="TIGR01260">
    <property type="entry name" value="ATP_synt_c"/>
    <property type="match status" value="1"/>
</dbReference>
<dbReference type="NCBIfam" id="NF005363">
    <property type="entry name" value="PRK06876.1"/>
    <property type="match status" value="1"/>
</dbReference>
<dbReference type="Pfam" id="PF00137">
    <property type="entry name" value="ATP-synt_C"/>
    <property type="match status" value="1"/>
</dbReference>
<dbReference type="PRINTS" id="PR00124">
    <property type="entry name" value="ATPASEC"/>
</dbReference>
<dbReference type="SUPFAM" id="SSF81333">
    <property type="entry name" value="F1F0 ATP synthase subunit C"/>
    <property type="match status" value="1"/>
</dbReference>
<dbReference type="PROSITE" id="PS00605">
    <property type="entry name" value="ATPASE_C"/>
    <property type="match status" value="1"/>
</dbReference>
<protein>
    <recommendedName>
        <fullName evidence="1">ATP synthase subunit c</fullName>
    </recommendedName>
    <alternativeName>
        <fullName evidence="1">ATP synthase F(0) sector subunit c</fullName>
    </alternativeName>
    <alternativeName>
        <fullName evidence="1">F-type ATPase subunit c</fullName>
        <shortName evidence="1">F-ATPase subunit c</shortName>
    </alternativeName>
    <alternativeName>
        <fullName evidence="1">Lipid-binding protein</fullName>
    </alternativeName>
</protein>
<sequence length="79" mass="8211">MENLSVDLLYMAAALMMGLAAIGAAIGIGILGGKFLEGAARQPDLIPLLRTQFFIVMGLVDAIPMIAVGLGLYVMFAVA</sequence>
<gene>
    <name evidence="1" type="primary">atpE</name>
    <name type="ordered locus">PC1_4252</name>
</gene>
<evidence type="ECO:0000255" key="1">
    <source>
        <dbReference type="HAMAP-Rule" id="MF_01396"/>
    </source>
</evidence>
<name>ATPL_PECCP</name>
<comment type="function">
    <text evidence="1">F(1)F(0) ATP synthase produces ATP from ADP in the presence of a proton or sodium gradient. F-type ATPases consist of two structural domains, F(1) containing the extramembraneous catalytic core and F(0) containing the membrane proton channel, linked together by a central stalk and a peripheral stalk. During catalysis, ATP synthesis in the catalytic domain of F(1) is coupled via a rotary mechanism of the central stalk subunits to proton translocation.</text>
</comment>
<comment type="function">
    <text evidence="1">Key component of the F(0) channel; it plays a direct role in translocation across the membrane. A homomeric c-ring of between 10-14 subunits forms the central stalk rotor element with the F(1) delta and epsilon subunits.</text>
</comment>
<comment type="subunit">
    <text evidence="1">F-type ATPases have 2 components, F(1) - the catalytic core - and F(0) - the membrane proton channel. F(1) has five subunits: alpha(3), beta(3), gamma(1), delta(1), epsilon(1). F(0) has three main subunits: a(1), b(2) and c(10-14). The alpha and beta chains form an alternating ring which encloses part of the gamma chain. F(1) is attached to F(0) by a central stalk formed by the gamma and epsilon chains, while a peripheral stalk is formed by the delta and b chains.</text>
</comment>
<comment type="subcellular location">
    <subcellularLocation>
        <location evidence="1">Cell inner membrane</location>
        <topology evidence="1">Multi-pass membrane protein</topology>
    </subcellularLocation>
</comment>
<comment type="similarity">
    <text evidence="1">Belongs to the ATPase C chain family.</text>
</comment>
<accession>C6DJG7</accession>
<feature type="chain" id="PRO_1000215163" description="ATP synthase subunit c">
    <location>
        <begin position="1"/>
        <end position="79"/>
    </location>
</feature>
<feature type="transmembrane region" description="Helical" evidence="1">
    <location>
        <begin position="11"/>
        <end position="31"/>
    </location>
</feature>
<feature type="transmembrane region" description="Helical" evidence="1">
    <location>
        <begin position="53"/>
        <end position="73"/>
    </location>
</feature>
<feature type="site" description="Reversibly protonated during proton transport" evidence="1">
    <location>
        <position position="61"/>
    </location>
</feature>
<reference key="1">
    <citation type="submission" date="2009-07" db="EMBL/GenBank/DDBJ databases">
        <title>Complete sequence of Pectobacterium carotovorum subsp. carotovorum PC1.</title>
        <authorList>
            <consortium name="US DOE Joint Genome Institute"/>
            <person name="Lucas S."/>
            <person name="Copeland A."/>
            <person name="Lapidus A."/>
            <person name="Glavina del Rio T."/>
            <person name="Tice H."/>
            <person name="Bruce D."/>
            <person name="Goodwin L."/>
            <person name="Pitluck S."/>
            <person name="Munk A.C."/>
            <person name="Brettin T."/>
            <person name="Detter J.C."/>
            <person name="Han C."/>
            <person name="Tapia R."/>
            <person name="Larimer F."/>
            <person name="Land M."/>
            <person name="Hauser L."/>
            <person name="Kyrpides N."/>
            <person name="Mikhailova N."/>
            <person name="Balakrishnan V."/>
            <person name="Glasner J."/>
            <person name="Perna N.T."/>
        </authorList>
    </citation>
    <scope>NUCLEOTIDE SEQUENCE [LARGE SCALE GENOMIC DNA]</scope>
    <source>
        <strain>PC1</strain>
    </source>
</reference>
<proteinExistence type="inferred from homology"/>
<keyword id="KW-0066">ATP synthesis</keyword>
<keyword id="KW-0997">Cell inner membrane</keyword>
<keyword id="KW-1003">Cell membrane</keyword>
<keyword id="KW-0138">CF(0)</keyword>
<keyword id="KW-0375">Hydrogen ion transport</keyword>
<keyword id="KW-0406">Ion transport</keyword>
<keyword id="KW-0446">Lipid-binding</keyword>
<keyword id="KW-0472">Membrane</keyword>
<keyword id="KW-0812">Transmembrane</keyword>
<keyword id="KW-1133">Transmembrane helix</keyword>
<keyword id="KW-0813">Transport</keyword>